<keyword id="KW-0002">3D-structure</keyword>
<keyword id="KW-1157">Cap snatching</keyword>
<keyword id="KW-1262">Eukaryotic host gene expression shutoff by virus</keyword>
<keyword id="KW-1191">Eukaryotic host transcription shutoff by virus</keyword>
<keyword id="KW-1190">Host gene expression shutoff by virus</keyword>
<keyword id="KW-1045">Host mitochondrion</keyword>
<keyword id="KW-1048">Host nucleus</keyword>
<keyword id="KW-0945">Host-virus interaction</keyword>
<keyword id="KW-1090">Inhibition of host innate immune response by virus</keyword>
<keyword id="KW-1097">Inhibition of host MAVS by virus</keyword>
<keyword id="KW-1113">Inhibition of host RLR pathway by virus</keyword>
<keyword id="KW-1104">Inhibition of host RNA polymerase II by virus</keyword>
<keyword id="KW-0506">mRNA capping</keyword>
<keyword id="KW-0507">mRNA processing</keyword>
<keyword id="KW-0899">Viral immunoevasion</keyword>
<keyword id="KW-1195">Viral transcription</keyword>
<keyword id="KW-0946">Virion</keyword>
<organismHost>
    <name type="scientific">Aves</name>
    <dbReference type="NCBI Taxonomy" id="8782"/>
</organismHost>
<organismHost>
    <name type="scientific">Cetacea</name>
    <name type="common">whales</name>
    <dbReference type="NCBI Taxonomy" id="9721"/>
</organismHost>
<organismHost>
    <name type="scientific">Homo sapiens</name>
    <name type="common">Human</name>
    <dbReference type="NCBI Taxonomy" id="9606"/>
</organismHost>
<organismHost>
    <name type="scientific">Phocidae</name>
    <name type="common">true seals</name>
    <dbReference type="NCBI Taxonomy" id="9709"/>
</organismHost>
<organismHost>
    <name type="scientific">Sus scrofa</name>
    <name type="common">Pig</name>
    <dbReference type="NCBI Taxonomy" id="9823"/>
</organismHost>
<gene>
    <name evidence="1" type="primary">PB2</name>
</gene>
<accession>Q91MB1</accession>
<accession>Q91MB0</accession>
<proteinExistence type="evidence at protein level"/>
<feature type="chain" id="PRO_0000279634" description="Polymerase basic protein 2">
    <location>
        <begin position="1"/>
        <end position="759"/>
    </location>
</feature>
<feature type="short sequence motif" description="Nuclear localization signal" evidence="1">
    <location>
        <begin position="736"/>
        <end position="739"/>
    </location>
</feature>
<feature type="site" description="Mammalian adaptation" evidence="1">
    <location>
        <position position="627"/>
    </location>
</feature>
<feature type="sequence variant" description="In strain: Isolate MA20c.">
    <original>D</original>
    <variation>N</variation>
    <location>
        <position position="701"/>
    </location>
</feature>
<feature type="strand" evidence="2">
    <location>
        <begin position="322"/>
        <end position="325"/>
    </location>
</feature>
<feature type="strand" evidence="2">
    <location>
        <begin position="328"/>
        <end position="335"/>
    </location>
</feature>
<feature type="strand" evidence="2">
    <location>
        <begin position="338"/>
        <end position="345"/>
    </location>
</feature>
<feature type="strand" evidence="2">
    <location>
        <begin position="351"/>
        <end position="359"/>
    </location>
</feature>
<feature type="strand" evidence="2">
    <location>
        <begin position="361"/>
        <end position="366"/>
    </location>
</feature>
<feature type="strand" evidence="2">
    <location>
        <begin position="368"/>
        <end position="377"/>
    </location>
</feature>
<feature type="strand" evidence="2">
    <location>
        <begin position="380"/>
        <end position="390"/>
    </location>
</feature>
<feature type="helix" evidence="2">
    <location>
        <begin position="391"/>
        <end position="404"/>
    </location>
</feature>
<feature type="helix" evidence="2">
    <location>
        <begin position="408"/>
        <end position="413"/>
    </location>
</feature>
<feature type="helix" evidence="2">
    <location>
        <begin position="430"/>
        <end position="440"/>
    </location>
</feature>
<feature type="helix" evidence="2">
    <location>
        <begin position="443"/>
        <end position="449"/>
    </location>
</feature>
<feature type="strand" evidence="2">
    <location>
        <begin position="451"/>
        <end position="453"/>
    </location>
</feature>
<feature type="strand" evidence="2">
    <location>
        <begin position="461"/>
        <end position="463"/>
    </location>
</feature>
<feature type="strand" evidence="2">
    <location>
        <begin position="469"/>
        <end position="475"/>
    </location>
</feature>
<feature type="strand" evidence="2">
    <location>
        <begin position="478"/>
        <end position="480"/>
    </location>
</feature>
<comment type="function">
    <text evidence="1">Plays an essential role in transcription initiation and cap-stealing mechanism, in which cellular capped pre-mRNAs are used to generate primers for viral transcription. Recognizes and binds the 7-methylguanosine-containing cap of the target pre-RNA which is subsequently cleaved after 10-13 nucleotides by the viral protein PA. Plays a role in the initiation of the viral genome replication and modulates the activity of the ribonucleoprotein (RNP) complex. In addition, participates in the inhibition of type I interferon induction through interaction with and inhibition of the host mitochondrial antiviral signaling protein MAVS.</text>
</comment>
<comment type="subunit">
    <text evidence="1">Influenza RNA polymerase is composed of three subunits: PB1, PB2 and PA. Interacts (via N-terminus) with PB1 (via C-terminus). Interacts with nucleoprotein NP (via N-terminus). Interacts (via N-terminus) with host MAVS (via N-terminus); this interaction inhibits host innate immune response.</text>
</comment>
<comment type="subcellular location">
    <subcellularLocation>
        <location evidence="1">Virion</location>
    </subcellularLocation>
    <subcellularLocation>
        <location evidence="1">Host nucleus</location>
    </subcellularLocation>
    <subcellularLocation>
        <location evidence="1">Host mitochondrion</location>
    </subcellularLocation>
</comment>
<comment type="similarity">
    <text evidence="1">Belongs to the influenza viruses PB2 family.</text>
</comment>
<evidence type="ECO:0000255" key="1">
    <source>
        <dbReference type="HAMAP-Rule" id="MF_04062"/>
    </source>
</evidence>
<evidence type="ECO:0007829" key="2">
    <source>
        <dbReference type="PDB" id="4EQK"/>
    </source>
</evidence>
<organism>
    <name type="scientific">Influenza A virus (strain A/Hong Kong/1/1968 H3N2)</name>
    <dbReference type="NCBI Taxonomy" id="506350"/>
    <lineage>
        <taxon>Viruses</taxon>
        <taxon>Riboviria</taxon>
        <taxon>Orthornavirae</taxon>
        <taxon>Negarnaviricota</taxon>
        <taxon>Polyploviricotina</taxon>
        <taxon>Insthoviricetes</taxon>
        <taxon>Articulavirales</taxon>
        <taxon>Orthomyxoviridae</taxon>
        <taxon>Alphainfluenzavirus</taxon>
        <taxon>Alphainfluenzavirus influenzae</taxon>
        <taxon>Influenza A virus</taxon>
    </lineage>
</organism>
<reference key="1">
    <citation type="journal article" date="2001" name="Proc. Natl. Acad. Sci. U.S.A.">
        <title>Pattern of mutation in the genome of influenza A virus on adaptation to increased virulence in the mouse lung: identification of functional themes.</title>
        <authorList>
            <person name="Brown E.G."/>
            <person name="Liu H."/>
            <person name="Kit L.C."/>
            <person name="Baird S."/>
            <person name="Nesrallah M."/>
        </authorList>
    </citation>
    <scope>NUCLEOTIDE SEQUENCE [GENOMIC RNA]</scope>
    <source>
        <strain>A/Hong Kong/1/68</strain>
        <strain>Isolate MA20c</strain>
    </source>
</reference>
<protein>
    <recommendedName>
        <fullName evidence="1">Polymerase basic protein 2</fullName>
    </recommendedName>
    <alternativeName>
        <fullName evidence="1">RNA-directed RNA polymerase subunit P3</fullName>
    </alternativeName>
</protein>
<name>PB2_I68A4</name>
<dbReference type="EMBL" id="AF348170">
    <property type="protein sequence ID" value="AAK51712.1"/>
    <property type="molecule type" value="Genomic_RNA"/>
</dbReference>
<dbReference type="EMBL" id="AF348171">
    <property type="protein sequence ID" value="AAK51713.1"/>
    <property type="molecule type" value="Genomic_RNA"/>
</dbReference>
<dbReference type="PDB" id="4EQK">
    <property type="method" value="X-ray"/>
    <property type="resolution" value="1.95 A"/>
    <property type="chains" value="A=318-483"/>
</dbReference>
<dbReference type="PDBsum" id="4EQK"/>
<dbReference type="SMR" id="Q91MB1"/>
<dbReference type="EvolutionaryTrace" id="Q91MB1"/>
<dbReference type="PRO" id="PR:Q91MB1"/>
<dbReference type="Proteomes" id="UP000142359">
    <property type="component" value="Genome"/>
</dbReference>
<dbReference type="GO" id="GO:0033650">
    <property type="term" value="C:host cell mitochondrion"/>
    <property type="evidence" value="ECO:0007669"/>
    <property type="project" value="UniProtKB-SubCell"/>
</dbReference>
<dbReference type="GO" id="GO:0042025">
    <property type="term" value="C:host cell nucleus"/>
    <property type="evidence" value="ECO:0007669"/>
    <property type="project" value="UniProtKB-SubCell"/>
</dbReference>
<dbReference type="GO" id="GO:0044423">
    <property type="term" value="C:virion component"/>
    <property type="evidence" value="ECO:0007669"/>
    <property type="project" value="UniProtKB-UniRule"/>
</dbReference>
<dbReference type="GO" id="GO:0003723">
    <property type="term" value="F:RNA binding"/>
    <property type="evidence" value="ECO:0007669"/>
    <property type="project" value="UniProtKB-UniRule"/>
</dbReference>
<dbReference type="GO" id="GO:0003968">
    <property type="term" value="F:RNA-directed RNA polymerase activity"/>
    <property type="evidence" value="ECO:0007669"/>
    <property type="project" value="UniProtKB-UniRule"/>
</dbReference>
<dbReference type="GO" id="GO:0006370">
    <property type="term" value="P:7-methylguanosine mRNA capping"/>
    <property type="evidence" value="ECO:0007669"/>
    <property type="project" value="UniProtKB-UniRule"/>
</dbReference>
<dbReference type="GO" id="GO:0075526">
    <property type="term" value="P:cap snatching"/>
    <property type="evidence" value="ECO:0007669"/>
    <property type="project" value="UniProtKB-UniRule"/>
</dbReference>
<dbReference type="GO" id="GO:0006351">
    <property type="term" value="P:DNA-templated transcription"/>
    <property type="evidence" value="ECO:0007669"/>
    <property type="project" value="UniProtKB-UniRule"/>
</dbReference>
<dbReference type="GO" id="GO:0039545">
    <property type="term" value="P:symbiont-mediated suppression of host cytoplasmic pattern recognition receptor signaling pathway via inhibition of MAVS activity"/>
    <property type="evidence" value="ECO:0007669"/>
    <property type="project" value="UniProtKB-UniRule"/>
</dbReference>
<dbReference type="GO" id="GO:0039657">
    <property type="term" value="P:symbiont-mediated suppression of host gene expression"/>
    <property type="evidence" value="ECO:0007669"/>
    <property type="project" value="UniProtKB-KW"/>
</dbReference>
<dbReference type="GO" id="GO:0039523">
    <property type="term" value="P:symbiont-mediated suppression of host mRNA transcription via inhibition of RNA polymerase II activity"/>
    <property type="evidence" value="ECO:0007669"/>
    <property type="project" value="UniProtKB-UniRule"/>
</dbReference>
<dbReference type="GO" id="GO:0039694">
    <property type="term" value="P:viral RNA genome replication"/>
    <property type="evidence" value="ECO:0007669"/>
    <property type="project" value="InterPro"/>
</dbReference>
<dbReference type="FunFam" id="3.30.30.90:FF:000001">
    <property type="entry name" value="Polymerase basic protein 2"/>
    <property type="match status" value="1"/>
</dbReference>
<dbReference type="Gene3D" id="3.30.30.90">
    <property type="entry name" value="Polymerase Basic Protein 2, C-terminal domain"/>
    <property type="match status" value="1"/>
</dbReference>
<dbReference type="HAMAP" id="MF_04062">
    <property type="entry name" value="INV_PB2"/>
    <property type="match status" value="1"/>
</dbReference>
<dbReference type="InterPro" id="IPR049110">
    <property type="entry name" value="Flu_PB2_2nd"/>
</dbReference>
<dbReference type="InterPro" id="IPR049114">
    <property type="entry name" value="Flu_PB2_6th"/>
</dbReference>
<dbReference type="InterPro" id="IPR049115">
    <property type="entry name" value="Flu_PB2_C"/>
</dbReference>
<dbReference type="InterPro" id="IPR048298">
    <property type="entry name" value="Flu_PB2_CAP-bd"/>
</dbReference>
<dbReference type="InterPro" id="IPR049111">
    <property type="entry name" value="Flu_PB2_middle"/>
</dbReference>
<dbReference type="InterPro" id="IPR049106">
    <property type="entry name" value="Flu_PB2_N"/>
</dbReference>
<dbReference type="InterPro" id="IPR001591">
    <property type="entry name" value="INV_PB2"/>
</dbReference>
<dbReference type="InterPro" id="IPR049113">
    <property type="entry name" value="PB2_helical"/>
</dbReference>
<dbReference type="InterPro" id="IPR037258">
    <property type="entry name" value="PDB2_C"/>
</dbReference>
<dbReference type="Pfam" id="PF20947">
    <property type="entry name" value="Flu_PB2_1st"/>
    <property type="match status" value="1"/>
</dbReference>
<dbReference type="Pfam" id="PF20948">
    <property type="entry name" value="Flu_PB2_2nd"/>
    <property type="match status" value="1"/>
</dbReference>
<dbReference type="Pfam" id="PF20949">
    <property type="entry name" value="Flu_PB2_3rd"/>
    <property type="match status" value="1"/>
</dbReference>
<dbReference type="Pfam" id="PF20950">
    <property type="entry name" value="Flu_PB2_4th"/>
    <property type="match status" value="1"/>
</dbReference>
<dbReference type="Pfam" id="PF00604">
    <property type="entry name" value="Flu_PB2_5th"/>
    <property type="match status" value="1"/>
</dbReference>
<dbReference type="Pfam" id="PF20951">
    <property type="entry name" value="Flu_PB2_6th"/>
    <property type="match status" value="1"/>
</dbReference>
<dbReference type="Pfam" id="PF20952">
    <property type="entry name" value="Flu_PB2_7th"/>
    <property type="match status" value="1"/>
</dbReference>
<dbReference type="SUPFAM" id="SSF160453">
    <property type="entry name" value="PB2 C-terminal domain-like"/>
    <property type="match status" value="1"/>
</dbReference>
<sequence>MERIKELRNLMSQSRTREILTKTTVDHMAIIKKYTSGRQEKNPSLRMKWMMAMKYPITADKRITEMVPERNEQGQTLWSKMSDAGSDRVMVSPLAVTWWNRNGPMTSTVHYPKVYKTYFEKVERLKHGTFGPVHFRNQVKIRRRVDINPGHADLSAKEAQDVIMEVVFPNEVGARILTSESQLTITKEKKEELQDCKISPLMVAYMLERELVRKTRFLPVAGGTSSVYIEVLHLTQGTCWEQMYTPGGEVRNDDVDQSLIIAARNIVRRAAVSADPLASLLEMCHSTQIGGTRMVDILRQNPTEEQAVDICKAAMGLRISSSFSFGGFTFKRTSGSSIKREEELLTGNLQTLKIRVHEGYEEFTMVGKRATAILRKATRRLVQLIVSGRDEQSVAEAIIVAMVFSQEDCMIKAVRGDLNFVNRANQRLNPMHQLLRHFQKDAKVLFQNWGIEHIDNVMGMIGVLPDMTPSTEMSMRGIRVSKMGVDEYSSTERVVVSIDRFLRVRDQRGNVLLSPEEVSETQGTEKLTITYSSSMMWEINGPESVLVNTYQWIIRNWETVKIQWSQNPTMLYNKMEFEPFQSLIPKAIRGQYSGFVRTLFQQMRDVLGTFDTTQIIKLLPFAAAPPKQSRMQFSSLTVNVRGSGMRILVRGNSPVFNYNKTTKRLTILGKDAGTLIEDPDEGTSGVESAVLRGFLILGKEDRRYGPALSINELSNLAKGEKANVLIGQGDVVLVMKRKRDSSILTDSQTATKRIRMAIN</sequence>